<comment type="function">
    <text evidence="5 6 7 8 9 10 11 12 13 14 15 16">RNA-binding protein that binds to the consensus sequence 5'-UGUGCCAUA-3' in mRNA 3'-UTRs (PubMed:19901328, PubMed:21372189, PubMed:22205700, PubMed:30652968, PubMed:31397673, PubMed:34908132, PubMed:37953271). Involved in the control of stem cells and sex determination in the C.elegans hermaphrodite germline (PubMed:9393998). May also play a role in the hermaphrodite germline proliferation and oogenesis (PubMed:15454534, PubMed:27864381). By binding to the 3'-UTR, represses phosphatase lip-1 expression in the distal part of the germline mitotic zone (PubMed:16319922). Binds specifically to the regulatory region of fem-3 3'-UTR and mediates the sperm/oocyte switch (PubMed:9393998). Negatively regulates gld-3 expression possibly by directly binding to two sites within the gld-3 isoform b 3'-UTR (PubMed:15454534). Suppresses germline tumor formation by preventing the dedifferentiation of secondary spermatocytes (PubMed:22820175). C-terminal disordered region probably auto-inhibits RNA binding; auto-inhibition may be reversed by interaction with lst-1 (PubMed:37953271).</text>
</comment>
<comment type="subunit">
    <text evidence="4 11 13 14 15">Interacts (via C-terminus) with gld-3 isoform A in an RNA-independent manner (PubMed:12431376). Interacts with dlc-1, and is required for the localization of fbf-2 to P granules (PubMed:27864381). Interacts (via RNA-binding domain) with lst-1, probably displaces bound auto-inhibitory C-terminal tail and alters its RNA-binding affinity (PubMed:31397673, PubMed:34908132, PubMed:37953271).</text>
</comment>
<comment type="subcellular location">
    <subcellularLocation>
        <location evidence="16">Cytoplasm</location>
    </subcellularLocation>
    <subcellularLocation>
        <location evidence="11">Cytoplasmic granule</location>
    </subcellularLocation>
    <text evidence="11">Recruited to P granules by dlc-1.</text>
</comment>
<comment type="tissue specificity">
    <text evidence="16">Expressed specifically in the germline (at protein level).</text>
</comment>
<comment type="developmental stage">
    <text evidence="16">Expression increases in abundance during postembryonic development and peaks during the fourth larval stage.</text>
</comment>
<comment type="miscellaneous">
    <text>Fbf-1 and fbf-2 are &gt;90% identical on both nucleotide and protein sequence level. Experimental approaches often do not distinguish between the two genes, which are collectively referred to as fbf and are considered to be functionally redundant.</text>
</comment>
<dbReference type="EMBL" id="FO080717">
    <property type="protein sequence ID" value="CCD66119.1"/>
    <property type="molecule type" value="Genomic_DNA"/>
</dbReference>
<dbReference type="PIR" id="T16128">
    <property type="entry name" value="T16128"/>
</dbReference>
<dbReference type="RefSeq" id="NP_001367592.1">
    <property type="nucleotide sequence ID" value="NM_001381445.2"/>
</dbReference>
<dbReference type="RefSeq" id="NP_495220.1">
    <property type="nucleotide sequence ID" value="NM_062819.4"/>
</dbReference>
<dbReference type="PDB" id="3K5Q">
    <property type="method" value="X-ray"/>
    <property type="resolution" value="2.20 A"/>
    <property type="chains" value="A=164-575"/>
</dbReference>
<dbReference type="PDB" id="3K5Y">
    <property type="method" value="X-ray"/>
    <property type="resolution" value="2.30 A"/>
    <property type="chains" value="A=164-575"/>
</dbReference>
<dbReference type="PDB" id="3K5Z">
    <property type="method" value="X-ray"/>
    <property type="resolution" value="2.40 A"/>
    <property type="chains" value="A=164-575"/>
</dbReference>
<dbReference type="PDB" id="3K61">
    <property type="method" value="X-ray"/>
    <property type="resolution" value="2.21 A"/>
    <property type="chains" value="A=164-575"/>
</dbReference>
<dbReference type="PDB" id="3K62">
    <property type="method" value="X-ray"/>
    <property type="resolution" value="1.90 A"/>
    <property type="chains" value="A=164-575"/>
</dbReference>
<dbReference type="PDB" id="3K64">
    <property type="method" value="X-ray"/>
    <property type="resolution" value="2.00 A"/>
    <property type="chains" value="A=164-575"/>
</dbReference>
<dbReference type="PDB" id="3QG9">
    <property type="method" value="X-ray"/>
    <property type="resolution" value="2.25 A"/>
    <property type="chains" value="A=164-575"/>
</dbReference>
<dbReference type="PDB" id="3QGB">
    <property type="method" value="X-ray"/>
    <property type="resolution" value="2.40 A"/>
    <property type="chains" value="A=164-575"/>
</dbReference>
<dbReference type="PDB" id="3QGC">
    <property type="method" value="X-ray"/>
    <property type="resolution" value="1.90 A"/>
    <property type="chains" value="A=164-575"/>
</dbReference>
<dbReference type="PDB" id="3V6Y">
    <property type="method" value="X-ray"/>
    <property type="resolution" value="2.50 A"/>
    <property type="chains" value="A=164-575"/>
</dbReference>
<dbReference type="PDB" id="3V74">
    <property type="method" value="X-ray"/>
    <property type="resolution" value="2.30 A"/>
    <property type="chains" value="A=164-575"/>
</dbReference>
<dbReference type="PDB" id="6NOC">
    <property type="method" value="X-ray"/>
    <property type="resolution" value="2.85 A"/>
    <property type="chains" value="A=164-575"/>
</dbReference>
<dbReference type="PDB" id="6NOF">
    <property type="method" value="X-ray"/>
    <property type="resolution" value="2.25 A"/>
    <property type="chains" value="A=164-575"/>
</dbReference>
<dbReference type="PDB" id="6NOH">
    <property type="method" value="X-ray"/>
    <property type="resolution" value="2.25 A"/>
    <property type="chains" value="A=164-575"/>
</dbReference>
<dbReference type="PDB" id="6PUN">
    <property type="method" value="X-ray"/>
    <property type="resolution" value="2.10 A"/>
    <property type="chains" value="A/C=164-575"/>
</dbReference>
<dbReference type="PDB" id="7RZZ">
    <property type="method" value="X-ray"/>
    <property type="resolution" value="2.39 A"/>
    <property type="chains" value="A=164-575"/>
</dbReference>
<dbReference type="PDB" id="7S02">
    <property type="method" value="X-ray"/>
    <property type="resolution" value="2.34 A"/>
    <property type="chains" value="A=164-575"/>
</dbReference>
<dbReference type="PDB" id="8SJ7">
    <property type="method" value="X-ray"/>
    <property type="resolution" value="2.09 A"/>
    <property type="chains" value="A=164-632"/>
</dbReference>
<dbReference type="PDB" id="8VIV">
    <property type="method" value="X-ray"/>
    <property type="resolution" value="2.20 A"/>
    <property type="chains" value="A=164-575"/>
</dbReference>
<dbReference type="PDBsum" id="3K5Q"/>
<dbReference type="PDBsum" id="3K5Y"/>
<dbReference type="PDBsum" id="3K5Z"/>
<dbReference type="PDBsum" id="3K61"/>
<dbReference type="PDBsum" id="3K62"/>
<dbReference type="PDBsum" id="3K64"/>
<dbReference type="PDBsum" id="3QG9"/>
<dbReference type="PDBsum" id="3QGB"/>
<dbReference type="PDBsum" id="3QGC"/>
<dbReference type="PDBsum" id="3V6Y"/>
<dbReference type="PDBsum" id="3V74"/>
<dbReference type="PDBsum" id="6NOC"/>
<dbReference type="PDBsum" id="6NOF"/>
<dbReference type="PDBsum" id="6NOH"/>
<dbReference type="PDBsum" id="6PUN"/>
<dbReference type="PDBsum" id="7RZZ"/>
<dbReference type="PDBsum" id="7S02"/>
<dbReference type="PDBsum" id="8SJ7"/>
<dbReference type="PDBsum" id="8VIV"/>
<dbReference type="EMDB" id="EMD-45097"/>
<dbReference type="SMR" id="Q09312"/>
<dbReference type="BioGRID" id="39358">
    <property type="interactions" value="35"/>
</dbReference>
<dbReference type="FunCoup" id="Q09312">
    <property type="interactions" value="18"/>
</dbReference>
<dbReference type="IntAct" id="Q09312">
    <property type="interactions" value="2"/>
</dbReference>
<dbReference type="MINT" id="Q09312"/>
<dbReference type="STRING" id="6239.F21H12.5.1"/>
<dbReference type="PaxDb" id="6239-F21H12.5"/>
<dbReference type="PeptideAtlas" id="Q09312"/>
<dbReference type="EnsemblMetazoa" id="F21H12.5.1">
    <property type="protein sequence ID" value="F21H12.5.1"/>
    <property type="gene ID" value="WBGene00001402"/>
</dbReference>
<dbReference type="GeneID" id="174017"/>
<dbReference type="UCSC" id="F21H12.5">
    <property type="organism name" value="c. elegans"/>
</dbReference>
<dbReference type="AGR" id="WB:WBGene00001402"/>
<dbReference type="WormBase" id="F21H12.5">
    <property type="protein sequence ID" value="CE01916"/>
    <property type="gene ID" value="WBGene00001402"/>
    <property type="gene designation" value="fbf-2"/>
</dbReference>
<dbReference type="eggNOG" id="KOG1488">
    <property type="taxonomic scope" value="Eukaryota"/>
</dbReference>
<dbReference type="GeneTree" id="ENSGT00970000196043"/>
<dbReference type="HOGENOM" id="CLU_028494_1_0_1"/>
<dbReference type="InParanoid" id="Q09312"/>
<dbReference type="OMA" id="ICCEAVS"/>
<dbReference type="OrthoDB" id="668540at2759"/>
<dbReference type="PhylomeDB" id="Q09312"/>
<dbReference type="EvolutionaryTrace" id="Q09312"/>
<dbReference type="PRO" id="PR:Q09312"/>
<dbReference type="Proteomes" id="UP000001940">
    <property type="component" value="Chromosome II"/>
</dbReference>
<dbReference type="Bgee" id="WBGene00001402">
    <property type="expression patterns" value="Expressed in germ line (C elegans) and 3 other cell types or tissues"/>
</dbReference>
<dbReference type="GO" id="GO:0005737">
    <property type="term" value="C:cytoplasm"/>
    <property type="evidence" value="ECO:0000318"/>
    <property type="project" value="GO_Central"/>
</dbReference>
<dbReference type="GO" id="GO:0005634">
    <property type="term" value="C:nucleus"/>
    <property type="evidence" value="ECO:0000318"/>
    <property type="project" value="GO_Central"/>
</dbReference>
<dbReference type="GO" id="GO:0043186">
    <property type="term" value="C:P granule"/>
    <property type="evidence" value="ECO:0000314"/>
    <property type="project" value="WormBase"/>
</dbReference>
<dbReference type="GO" id="GO:0003730">
    <property type="term" value="F:mRNA 3'-UTR binding"/>
    <property type="evidence" value="ECO:0000314"/>
    <property type="project" value="WormBase"/>
</dbReference>
<dbReference type="GO" id="GO:0003723">
    <property type="term" value="F:RNA binding"/>
    <property type="evidence" value="ECO:0000269"/>
    <property type="project" value="DisProt"/>
</dbReference>
<dbReference type="GO" id="GO:0030154">
    <property type="term" value="P:cell differentiation"/>
    <property type="evidence" value="ECO:0007669"/>
    <property type="project" value="UniProtKB-KW"/>
</dbReference>
<dbReference type="GO" id="GO:0017148">
    <property type="term" value="P:negative regulation of translation"/>
    <property type="evidence" value="ECO:0000316"/>
    <property type="project" value="WormBase"/>
</dbReference>
<dbReference type="GO" id="GO:0010608">
    <property type="term" value="P:post-transcriptional regulation of gene expression"/>
    <property type="evidence" value="ECO:0000318"/>
    <property type="project" value="GO_Central"/>
</dbReference>
<dbReference type="GO" id="GO:0007548">
    <property type="term" value="P:sex differentiation"/>
    <property type="evidence" value="ECO:0007669"/>
    <property type="project" value="UniProtKB-KW"/>
</dbReference>
<dbReference type="CDD" id="cd07920">
    <property type="entry name" value="Pumilio"/>
    <property type="match status" value="1"/>
</dbReference>
<dbReference type="FunFam" id="1.25.10.10:FF:000558">
    <property type="entry name" value="Fem-3 mRNA-binding factor 2"/>
    <property type="match status" value="1"/>
</dbReference>
<dbReference type="Gene3D" id="1.25.10.10">
    <property type="entry name" value="Leucine-rich Repeat Variant"/>
    <property type="match status" value="1"/>
</dbReference>
<dbReference type="InterPro" id="IPR011989">
    <property type="entry name" value="ARM-like"/>
</dbReference>
<dbReference type="InterPro" id="IPR016024">
    <property type="entry name" value="ARM-type_fold"/>
</dbReference>
<dbReference type="InterPro" id="IPR033133">
    <property type="entry name" value="PUM-HD"/>
</dbReference>
<dbReference type="InterPro" id="IPR033712">
    <property type="entry name" value="Pumilio_RNA-bd"/>
</dbReference>
<dbReference type="InterPro" id="IPR001313">
    <property type="entry name" value="Pumilio_RNA-bd_rpt"/>
</dbReference>
<dbReference type="PANTHER" id="PTHR12537:SF112">
    <property type="entry name" value="FEM-3 MRNA-BINDING FACTOR 1-RELATED"/>
    <property type="match status" value="1"/>
</dbReference>
<dbReference type="PANTHER" id="PTHR12537">
    <property type="entry name" value="RNA BINDING PROTEIN PUMILIO-RELATED"/>
    <property type="match status" value="1"/>
</dbReference>
<dbReference type="Pfam" id="PF00806">
    <property type="entry name" value="PUF"/>
    <property type="match status" value="8"/>
</dbReference>
<dbReference type="SMART" id="SM00025">
    <property type="entry name" value="Pumilio"/>
    <property type="match status" value="8"/>
</dbReference>
<dbReference type="SUPFAM" id="SSF48371">
    <property type="entry name" value="ARM repeat"/>
    <property type="match status" value="1"/>
</dbReference>
<dbReference type="PROSITE" id="PS50302">
    <property type="entry name" value="PUM"/>
    <property type="match status" value="8"/>
</dbReference>
<dbReference type="PROSITE" id="PS50303">
    <property type="entry name" value="PUM_HD"/>
    <property type="match status" value="1"/>
</dbReference>
<protein>
    <recommendedName>
        <fullName>Fem-3 mRNA-binding factor 2</fullName>
    </recommendedName>
</protein>
<feature type="chain" id="PRO_0000075933" description="Fem-3 mRNA-binding factor 2">
    <location>
        <begin position="1"/>
        <end position="632"/>
    </location>
</feature>
<feature type="domain" description="PUM-HD" evidence="2">
    <location>
        <begin position="162"/>
        <end position="566"/>
    </location>
</feature>
<feature type="repeat" description="Pumilio 1" evidence="1">
    <location>
        <begin position="187"/>
        <end position="225"/>
    </location>
</feature>
<feature type="repeat" description="Pumilio 2" evidence="1">
    <location>
        <begin position="226"/>
        <end position="264"/>
    </location>
</feature>
<feature type="repeat" description="Pumilio 3" evidence="1">
    <location>
        <begin position="271"/>
        <end position="307"/>
    </location>
</feature>
<feature type="repeat" description="Pumilio 4" evidence="1">
    <location>
        <begin position="308"/>
        <end position="332"/>
    </location>
</feature>
<feature type="repeat" description="Pumilio 5" evidence="1">
    <location>
        <begin position="345"/>
        <end position="384"/>
    </location>
</feature>
<feature type="repeat" description="Pumilio 6" evidence="1">
    <location>
        <begin position="400"/>
        <end position="436"/>
    </location>
</feature>
<feature type="repeat" description="Pumilio 7" evidence="1">
    <location>
        <begin position="438"/>
        <end position="473"/>
    </location>
</feature>
<feature type="repeat" description="Pumilio 8" evidence="1">
    <location>
        <begin position="484"/>
        <end position="521"/>
    </location>
</feature>
<feature type="region of interest" description="Disordered" evidence="3">
    <location>
        <begin position="1"/>
        <end position="37"/>
    </location>
</feature>
<feature type="region of interest" description="Disordered" evidence="3">
    <location>
        <begin position="609"/>
        <end position="632"/>
    </location>
</feature>
<feature type="compositionally biased region" description="Basic residues" evidence="3">
    <location>
        <begin position="1"/>
        <end position="11"/>
    </location>
</feature>
<feature type="compositionally biased region" description="Polar residues" evidence="3">
    <location>
        <begin position="12"/>
        <end position="35"/>
    </location>
</feature>
<feature type="compositionally biased region" description="Low complexity" evidence="3">
    <location>
        <begin position="615"/>
        <end position="632"/>
    </location>
</feature>
<feature type="site" description="Interacts with lst-1" evidence="13">
    <location>
        <position position="479"/>
    </location>
</feature>
<feature type="mutagenesis site" description="Abolishes interaction with dlc-1." evidence="11">
    <original>P</original>
    <variation>A</variation>
    <location>
        <position position="28"/>
    </location>
</feature>
<feature type="mutagenesis site" description="Abolishes interaction with dlc-1." evidence="11">
    <original>S</original>
    <variation>A</variation>
    <variation>D</variation>
    <location>
        <position position="136"/>
    </location>
</feature>
<feature type="mutagenesis site" description="Abolishes interaction with dlc-1." evidence="11">
    <original>K</original>
    <variation>A</variation>
    <variation>D</variation>
    <location>
        <position position="137"/>
    </location>
</feature>
<feature type="mutagenesis site" description="Abolishes interaction with dlc-1." evidence="11">
    <location>
        <begin position="139"/>
        <end position="140"/>
    </location>
</feature>
<feature type="mutagenesis site" description="Reduces RNA binding affinity." evidence="8">
    <original>R</original>
    <variation>A</variation>
    <location>
        <position position="288"/>
    </location>
</feature>
<feature type="mutagenesis site" description="Broadens binding specificity at specific nucleotide positions in the RNA target." evidence="8">
    <original>R</original>
    <variation>F</variation>
    <variation>Y</variation>
    <location>
        <position position="288"/>
    </location>
</feature>
<feature type="mutagenesis site" description="Broadens binding specificity at specific nucleotide positions in the RNA target." evidence="8">
    <original>R</original>
    <variation>W</variation>
    <location>
        <position position="288"/>
    </location>
</feature>
<feature type="mutagenesis site" description="Increases binding affinity for 8 nt target RNA by comparison with 9 nt target; when associated with only Y-364, or with Y-364 and A- or S-367. Complements phenotype of RNAi-mediated knockdown of puf-8 in vivo; when associated with only Y-364." evidence="12">
    <original>C</original>
    <variation>A</variation>
    <location>
        <position position="363"/>
    </location>
</feature>
<feature type="mutagenesis site" description="Retains binding to 9 nt target RNA; when associated with A-364 and S-367, but binds equally to 8 and 9 nt targets when associated with S-367 alone, and alters binding specificity towards 8 nt RNA when associated with Y-364 and A- or S-367." evidence="12">
    <original>C</original>
    <variation>S</variation>
    <location>
        <position position="363"/>
    </location>
</feature>
<feature type="mutagenesis site" description="Abolishes binding affinity for both 8 and 9 nt target RNAs. However, plays a major role in increasing binding affinity for 8 nt RNA and retains base recognition specificity at positions 3 to 5; when associated with A- or S-363 and A- or S-367." evidence="12">
    <original>R</original>
    <variation>Y</variation>
    <location>
        <position position="364"/>
    </location>
</feature>
<feature type="mutagenesis site" description="Increases binding specificity for 8 nt RNA target when associated with A- or S-363 and Y-364." evidence="12">
    <original>Q</original>
    <variation>A</variation>
    <variation>S</variation>
    <location>
        <position position="367"/>
    </location>
</feature>
<feature type="mutagenesis site" description="Does not affect binding to lst-1." evidence="13">
    <original>L</original>
    <variation>A</variation>
    <location>
        <position position="444"/>
    </location>
</feature>
<feature type="mutagenesis site" description="Slightly reduces binding to lst-1." evidence="13">
    <original>Q</original>
    <variation>G</variation>
    <location>
        <position position="448"/>
    </location>
</feature>
<feature type="mutagenesis site" description="Reduces binding affinity to 9 nt target RNA." evidence="8">
    <original>H</original>
    <variation>A</variation>
    <location>
        <position position="454"/>
    </location>
</feature>
<feature type="mutagenesis site" description="Switches nucleotide specificity at positions +2 and +3 in the RNA target." evidence="8">
    <original>H</original>
    <variation>Y</variation>
    <variation>F</variation>
    <variation>W</variation>
    <variation>N</variation>
    <variation>R</variation>
    <location>
        <position position="454"/>
    </location>
</feature>
<feature type="mutagenesis site" description="Abrogates binding to lst-1." evidence="13">
    <location>
        <begin position="479"/>
        <end position="485"/>
    </location>
</feature>
<feature type="mutagenesis site" description="Reduces thermal stability and disrupts interaction with lst-1." evidence="15">
    <original>Y</original>
    <variation>A</variation>
    <location>
        <position position="479"/>
    </location>
</feature>
<feature type="mutagenesis site" description="Abrogates binding to lst-1." evidence="13">
    <original>Y</original>
    <variation>G</variation>
    <variation>A</variation>
    <variation>V</variation>
    <variation>Q</variation>
    <variation>F</variation>
    <variation>R</variation>
    <location>
        <position position="479"/>
    </location>
</feature>
<feature type="mutagenesis site" description="Does not affect binding to lst-1." evidence="13">
    <original>I</original>
    <variation>A</variation>
    <location>
        <position position="480"/>
    </location>
</feature>
<feature type="mutagenesis site" description="Does not affect binding to lst-1." evidence="13">
    <original>P</original>
    <variation>A</variation>
    <location>
        <position position="481"/>
    </location>
</feature>
<feature type="mutagenesis site" description="Does not affect binding to lst-1." evidence="13">
    <original>H</original>
    <variation>A</variation>
    <location>
        <position position="482"/>
    </location>
</feature>
<feature type="mutagenesis site" description="Does not affect binding to lst-1." evidence="13">
    <original>P</original>
    <variation>G</variation>
    <location>
        <position position="483"/>
    </location>
</feature>
<feature type="mutagenesis site" description="Does not affect binding to lst-1." evidence="13">
    <original>D</original>
    <variation>A</variation>
    <location>
        <position position="484"/>
    </location>
</feature>
<feature type="mutagenesis site" description="Does not affect binding to lst-1." evidence="13">
    <original>T</original>
    <variation>A</variation>
    <location>
        <position position="485"/>
    </location>
</feature>
<feature type="mutagenesis site" description="Reduces RNA binding affinity, probably because it disrupts binding outside of a 9 nt target." evidence="9">
    <original>S</original>
    <variation>A</variation>
    <location>
        <position position="554"/>
    </location>
</feature>
<feature type="mutagenesis site" description="Abolishes interaction with dlc-1." evidence="11">
    <location>
        <begin position="607"/>
        <end position="632"/>
    </location>
</feature>
<feature type="mutagenesis site" description="Reduces thermal stability and disrupts interaction with lst-1." evidence="15">
    <original>L</original>
    <variation>A</variation>
    <location>
        <position position="610"/>
    </location>
</feature>
<feature type="helix" evidence="36">
    <location>
        <begin position="170"/>
        <end position="172"/>
    </location>
</feature>
<feature type="strand" evidence="36">
    <location>
        <begin position="177"/>
        <end position="179"/>
    </location>
</feature>
<feature type="helix" evidence="36">
    <location>
        <begin position="185"/>
        <end position="191"/>
    </location>
</feature>
<feature type="helix" evidence="36">
    <location>
        <begin position="194"/>
        <end position="198"/>
    </location>
</feature>
<feature type="helix" evidence="36">
    <location>
        <begin position="201"/>
        <end position="210"/>
    </location>
</feature>
<feature type="strand" evidence="37">
    <location>
        <begin position="211"/>
        <end position="213"/>
    </location>
</feature>
<feature type="helix" evidence="36">
    <location>
        <begin position="217"/>
        <end position="227"/>
    </location>
</feature>
<feature type="strand" evidence="36">
    <location>
        <begin position="228"/>
        <end position="230"/>
    </location>
</feature>
<feature type="helix" evidence="36">
    <location>
        <begin position="231"/>
        <end position="238"/>
    </location>
</feature>
<feature type="helix" evidence="36">
    <location>
        <begin position="243"/>
        <end position="256"/>
    </location>
</feature>
<feature type="helix" evidence="36">
    <location>
        <begin position="262"/>
        <end position="275"/>
    </location>
</feature>
<feature type="helix" evidence="36">
    <location>
        <begin position="277"/>
        <end position="282"/>
    </location>
</feature>
<feature type="helix" evidence="36">
    <location>
        <begin position="286"/>
        <end position="296"/>
    </location>
</feature>
<feature type="helix" evidence="36">
    <location>
        <begin position="299"/>
        <end position="307"/>
    </location>
</feature>
<feature type="helix" evidence="36">
    <location>
        <begin position="313"/>
        <end position="320"/>
    </location>
</feature>
<feature type="turn" evidence="36">
    <location>
        <begin position="322"/>
        <end position="324"/>
    </location>
</feature>
<feature type="helix" evidence="36">
    <location>
        <begin position="325"/>
        <end position="334"/>
    </location>
</feature>
<feature type="helix" evidence="36">
    <location>
        <begin position="337"/>
        <end position="348"/>
    </location>
</feature>
<feature type="helix" evidence="36">
    <location>
        <begin position="350"/>
        <end position="357"/>
    </location>
</feature>
<feature type="helix" evidence="36">
    <location>
        <begin position="360"/>
        <end position="372"/>
    </location>
</feature>
<feature type="helix" evidence="36">
    <location>
        <begin position="377"/>
        <end position="379"/>
    </location>
</feature>
<feature type="helix" evidence="36">
    <location>
        <begin position="384"/>
        <end position="403"/>
    </location>
</feature>
<feature type="helix" evidence="36">
    <location>
        <begin position="405"/>
        <end position="410"/>
    </location>
</feature>
<feature type="turn" evidence="36">
    <location>
        <begin position="412"/>
        <end position="414"/>
    </location>
</feature>
<feature type="helix" evidence="36">
    <location>
        <begin position="415"/>
        <end position="423"/>
    </location>
</feature>
<feature type="helix" evidence="36">
    <location>
        <begin position="425"/>
        <end position="427"/>
    </location>
</feature>
<feature type="helix" evidence="36">
    <location>
        <begin position="428"/>
        <end position="438"/>
    </location>
</feature>
<feature type="turn" evidence="36">
    <location>
        <begin position="439"/>
        <end position="441"/>
    </location>
</feature>
<feature type="helix" evidence="36">
    <location>
        <begin position="443"/>
        <end position="447"/>
    </location>
</feature>
<feature type="helix" evidence="36">
    <location>
        <begin position="452"/>
        <end position="462"/>
    </location>
</feature>
<feature type="helix" evidence="36">
    <location>
        <begin position="465"/>
        <end position="477"/>
    </location>
</feature>
<feature type="turn" evidence="36">
    <location>
        <begin position="483"/>
        <end position="485"/>
    </location>
</feature>
<feature type="helix" evidence="36">
    <location>
        <begin position="489"/>
        <end position="495"/>
    </location>
</feature>
<feature type="helix" evidence="36">
    <location>
        <begin position="499"/>
        <end position="514"/>
    </location>
</feature>
<feature type="strand" evidence="38">
    <location>
        <begin position="521"/>
        <end position="524"/>
    </location>
</feature>
<feature type="helix" evidence="36">
    <location>
        <begin position="528"/>
        <end position="544"/>
    </location>
</feature>
<feature type="helix" evidence="36">
    <location>
        <begin position="546"/>
        <end position="549"/>
    </location>
</feature>
<feature type="helix" evidence="36">
    <location>
        <begin position="553"/>
        <end position="566"/>
    </location>
</feature>
<proteinExistence type="evidence at protein level"/>
<gene>
    <name evidence="17" type="primary">fbf-2</name>
    <name evidence="17" type="ORF">F21H12.5</name>
</gene>
<organism>
    <name type="scientific">Caenorhabditis elegans</name>
    <dbReference type="NCBI Taxonomy" id="6239"/>
    <lineage>
        <taxon>Eukaryota</taxon>
        <taxon>Metazoa</taxon>
        <taxon>Ecdysozoa</taxon>
        <taxon>Nematoda</taxon>
        <taxon>Chromadorea</taxon>
        <taxon>Rhabditida</taxon>
        <taxon>Rhabditina</taxon>
        <taxon>Rhabditomorpha</taxon>
        <taxon>Rhabditoidea</taxon>
        <taxon>Rhabditidae</taxon>
        <taxon>Peloderinae</taxon>
        <taxon>Caenorhabditis</taxon>
    </lineage>
</organism>
<sequence length="632" mass="71805">MDQSKMRRTNQFRKTSQKPPSTGIDSYPTPAQSPMAQHETPMWDFNSLNPYFSMLNMNDGINYARHQQNHIVTSRPPTPLTDLMSLRSFQSFPNVFMPVSRSRTSSFIQSDTDSSRLESDDFSQNVRCFSADIDRSKSYGSSKHYHLKYSRPALSRNSRSFTRSNNVLPTWSLDSNGEMRSRLSLSEVLDSGDLMKFAVDKTGCQFLEKAVKGSLTSYQKFQLFEQVIGRKDDFLKLSTNIFGNYLVQSVIGISLATNDDGYTKRQEKLKNFISSQMTDMCLDKFACRVIQSSLQNMDLSLACKLVQALPRDARLIAICVDQNANHVIQKVVAVIPLKNWEFIVDFVATPEHLRQICSDKYGCRVVQTIIEKLTADSMNVDLTSAAQNLRERALQRLMTSVTNRCQELATNEYANYIIQHIVSNDDLAVYRECIIEKCLMRNLLSLSQEKFASHVVEKAFLHAPLELLAEMMDEIFDGYIPHPDTGKDALDIMMFHQFGNYVVQCMLTICCDAVSGRRQTKEGGYDHAISFQDWLKKLHSRVTKERHRLSRFSSGKKMIETLANLRSTHPIYELQSSGHDSFKTDYFSTASEHDGPELEKNGIEEGSLMLEPRSNKSSVSVKFSSSGSHGDD</sequence>
<name>FBF2_CAEEL</name>
<keyword id="KW-0002">3D-structure</keyword>
<keyword id="KW-0963">Cytoplasm</keyword>
<keyword id="KW-0217">Developmental protein</keyword>
<keyword id="KW-0221">Differentiation</keyword>
<keyword id="KW-1185">Reference proteome</keyword>
<keyword id="KW-0677">Repeat</keyword>
<keyword id="KW-0694">RNA-binding</keyword>
<keyword id="KW-0726">Sexual differentiation</keyword>
<evidence type="ECO:0000255" key="1">
    <source>
        <dbReference type="PROSITE-ProRule" id="PRU00317"/>
    </source>
</evidence>
<evidence type="ECO:0000255" key="2">
    <source>
        <dbReference type="PROSITE-ProRule" id="PRU00318"/>
    </source>
</evidence>
<evidence type="ECO:0000256" key="3">
    <source>
        <dbReference type="SAM" id="MobiDB-lite"/>
    </source>
</evidence>
<evidence type="ECO:0000269" key="4">
    <source>
    </source>
</evidence>
<evidence type="ECO:0000269" key="5">
    <source>
    </source>
</evidence>
<evidence type="ECO:0000269" key="6">
    <source>
    </source>
</evidence>
<evidence type="ECO:0000269" key="7">
    <source>
    </source>
</evidence>
<evidence type="ECO:0000269" key="8">
    <source>
    </source>
</evidence>
<evidence type="ECO:0000269" key="9">
    <source>
    </source>
</evidence>
<evidence type="ECO:0000269" key="10">
    <source>
    </source>
</evidence>
<evidence type="ECO:0000269" key="11">
    <source>
    </source>
</evidence>
<evidence type="ECO:0000269" key="12">
    <source>
    </source>
</evidence>
<evidence type="ECO:0000269" key="13">
    <source>
    </source>
</evidence>
<evidence type="ECO:0000269" key="14">
    <source>
    </source>
</evidence>
<evidence type="ECO:0000269" key="15">
    <source>
    </source>
</evidence>
<evidence type="ECO:0000269" key="16">
    <source>
    </source>
</evidence>
<evidence type="ECO:0000312" key="17">
    <source>
        <dbReference type="WormBase" id="F21H12.5"/>
    </source>
</evidence>
<evidence type="ECO:0007744" key="18">
    <source>
        <dbReference type="PDB" id="3K5Q"/>
    </source>
</evidence>
<evidence type="ECO:0007744" key="19">
    <source>
        <dbReference type="PDB" id="3K5Y"/>
    </source>
</evidence>
<evidence type="ECO:0007744" key="20">
    <source>
        <dbReference type="PDB" id="3K5Z"/>
    </source>
</evidence>
<evidence type="ECO:0007744" key="21">
    <source>
        <dbReference type="PDB" id="3K61"/>
    </source>
</evidence>
<evidence type="ECO:0007744" key="22">
    <source>
        <dbReference type="PDB" id="3K62"/>
    </source>
</evidence>
<evidence type="ECO:0007744" key="23">
    <source>
        <dbReference type="PDB" id="3K64"/>
    </source>
</evidence>
<evidence type="ECO:0007744" key="24">
    <source>
        <dbReference type="PDB" id="3QG9"/>
    </source>
</evidence>
<evidence type="ECO:0007744" key="25">
    <source>
        <dbReference type="PDB" id="3QGB"/>
    </source>
</evidence>
<evidence type="ECO:0007744" key="26">
    <source>
        <dbReference type="PDB" id="3QGC"/>
    </source>
</evidence>
<evidence type="ECO:0007744" key="27">
    <source>
        <dbReference type="PDB" id="3V6Y"/>
    </source>
</evidence>
<evidence type="ECO:0007744" key="28">
    <source>
        <dbReference type="PDB" id="3V74"/>
    </source>
</evidence>
<evidence type="ECO:0007744" key="29">
    <source>
        <dbReference type="PDB" id="6NOC"/>
    </source>
</evidence>
<evidence type="ECO:0007744" key="30">
    <source>
        <dbReference type="PDB" id="6NOF"/>
    </source>
</evidence>
<evidence type="ECO:0007744" key="31">
    <source>
        <dbReference type="PDB" id="6NOH"/>
    </source>
</evidence>
<evidence type="ECO:0007744" key="32">
    <source>
        <dbReference type="PDB" id="6PUN"/>
    </source>
</evidence>
<evidence type="ECO:0007744" key="33">
    <source>
        <dbReference type="PDB" id="7RZZ"/>
    </source>
</evidence>
<evidence type="ECO:0007744" key="34">
    <source>
        <dbReference type="PDB" id="7S02"/>
    </source>
</evidence>
<evidence type="ECO:0007744" key="35">
    <source>
        <dbReference type="PDB" id="8SJ7"/>
    </source>
</evidence>
<evidence type="ECO:0007829" key="36">
    <source>
        <dbReference type="PDB" id="3K62"/>
    </source>
</evidence>
<evidence type="ECO:0007829" key="37">
    <source>
        <dbReference type="PDB" id="6NOC"/>
    </source>
</evidence>
<evidence type="ECO:0007829" key="38">
    <source>
        <dbReference type="PDB" id="6NOH"/>
    </source>
</evidence>
<accession>Q09312</accession>
<reference key="1">
    <citation type="journal article" date="1998" name="Science">
        <title>Genome sequence of the nematode C. elegans: a platform for investigating biology.</title>
        <authorList>
            <consortium name="The C. elegans sequencing consortium"/>
        </authorList>
    </citation>
    <scope>NUCLEOTIDE SEQUENCE [LARGE SCALE GENOMIC DNA]</scope>
    <source>
        <strain>Bristol N2</strain>
    </source>
</reference>
<reference key="2">
    <citation type="journal article" date="1997" name="Nature">
        <title>A conserved RNA-binding protein that regulates sexual fates in the C. elegans hermaphrodite germ line.</title>
        <authorList>
            <person name="Zhang B."/>
            <person name="Gallegos M."/>
            <person name="Puoti A."/>
            <person name="Durkin E."/>
            <person name="Fields S."/>
            <person name="Kimble J."/>
            <person name="Wickens M.P."/>
        </authorList>
    </citation>
    <scope>FUNCTION</scope>
    <scope>SUBCELLULAR LOCATION</scope>
    <scope>TISSUE SPECIFICITY</scope>
    <scope>DEVELOPMENTAL STAGE</scope>
</reference>
<reference key="3">
    <citation type="journal article" date="2002" name="Dev. Cell">
        <title>GLD-3, a bicaudal-C homolog that inhibits FBF to control germline sex determination in C. elegans.</title>
        <authorList>
            <person name="Eckmann C.R."/>
            <person name="Kraemer B."/>
            <person name="Wickens M."/>
            <person name="Kimble J."/>
        </authorList>
    </citation>
    <scope>INTERACTION WITH GLD-3</scope>
</reference>
<reference key="4">
    <citation type="journal article" date="2004" name="Genetics">
        <title>GLD-3 and control of the mitosis/meiosis decision in the germline of Caenorhabditis elegans.</title>
        <authorList>
            <person name="Eckmann C.R."/>
            <person name="Crittenden S.L."/>
            <person name="Suh N."/>
            <person name="Kimble J."/>
        </authorList>
    </citation>
    <scope>FUNCTION</scope>
</reference>
<reference key="5">
    <citation type="journal article" date="2006" name="EMBO J.">
        <title>LIP-1 phosphatase controls the extent of germline proliferation in Caenorhabditis elegans.</title>
        <authorList>
            <person name="Lee M.H."/>
            <person name="Hook B."/>
            <person name="Lamont L.B."/>
            <person name="Wickens M."/>
            <person name="Kimble J."/>
        </authorList>
    </citation>
    <scope>FUNCTION</scope>
</reference>
<reference key="6">
    <citation type="journal article" date="2012" name="Biochim. Biophys. Acta">
        <title>The Ras-ERK MAPK regulatory network controls dedifferentiation in Caenorhabditis elegans germline.</title>
        <authorList>
            <person name="Cha D.S."/>
            <person name="Datla U.S."/>
            <person name="Hollis S.E."/>
            <person name="Kimble J."/>
            <person name="Lee M.H."/>
        </authorList>
    </citation>
    <scope>FUNCTION</scope>
</reference>
<reference key="7">
    <citation type="journal article" date="2016" name="Development">
        <title>Dynein light chain DLC-1 promotes localization and function of the PUF protein FBF-2 in germline progenitor cells.</title>
        <authorList>
            <person name="Wang X."/>
            <person name="Olson J.R."/>
            <person name="Rasoloson D."/>
            <person name="Ellenbecker M."/>
            <person name="Bailey J."/>
            <person name="Voronina E."/>
        </authorList>
    </citation>
    <scope>FUNCTION</scope>
    <scope>INTERACTION WITH DLC-1</scope>
    <scope>SUBCELLULAR LOCATION</scope>
    <scope>MUTAGENESIS OF PRO-28; SER-136; LYS-137; 139-TYR-GLY-140 AND 607-SER--ASP-632</scope>
</reference>
<reference evidence="18 19 20 21 22 23" key="8">
    <citation type="journal article" date="2009" name="Proc. Natl. Acad. Sci. U.S.A.">
        <title>Structural basis for specific recognition of multiple mRNA targets by a PUF regulatory protein.</title>
        <authorList>
            <person name="Wang Y."/>
            <person name="Opperman L."/>
            <person name="Wickens M."/>
            <person name="Hall T.M."/>
        </authorList>
    </citation>
    <scope>X-RAY CRYSTALLOGRAPHY (1.90 ANGSTROMS) OF 164-575 IN COMPLEXES WITH RNA</scope>
    <scope>FUNCTION</scope>
</reference>
<reference evidence="24 25 26" key="9">
    <citation type="journal article" date="2011" name="RNA">
        <title>Stacking interactions in PUF-RNA complexes.</title>
        <authorList>
            <person name="Koh Y.Y."/>
            <person name="Wang Y."/>
            <person name="Qiu C."/>
            <person name="Opperman L."/>
            <person name="Gross L."/>
            <person name="Tanaka Hall T.M."/>
            <person name="Wickens M."/>
        </authorList>
    </citation>
    <scope>X-RAY CRYSTALLOGRAPHY (1.90 ANGSTROMS) OF 164-575 IN APO AND MUTANT TYR-288 IN COMPLEXES WITH RNA</scope>
    <scope>FUNCTION</scope>
    <scope>MUTAGENESIS OF ARG-288 AND HIS-454</scope>
</reference>
<reference evidence="27 28" key="10">
    <citation type="journal article" date="2012" name="J. Biol. Chem.">
        <title>Divergence of Pumilio/fem-3 mRNA binding factor (PUF) protein specificity through variations in an RNA-binding pocket.</title>
        <authorList>
            <person name="Qiu C."/>
            <person name="Kershner A."/>
            <person name="Wang Y."/>
            <person name="Holley C.P."/>
            <person name="Wilinski D."/>
            <person name="Keles S."/>
            <person name="Kimble J."/>
            <person name="Wickens M."/>
            <person name="Hall T.M."/>
        </authorList>
    </citation>
    <scope>X-RAY CRYSTALLOGRAPHY (2.30 ANGSTROMS) OF 164-575 IN COMPLEXES WITH RNA</scope>
    <scope>FUNCTION</scope>
    <scope>MUTAGENESIS OF SER-554</scope>
</reference>
<reference evidence="29 30 31" key="11">
    <citation type="journal article" date="2019" name="Elife">
        <title>Engineering a conserved RNA regulatory protein repurposes its biological function in vivo.</title>
        <authorList>
            <person name="Bhat V.D."/>
            <person name="McCann K.L."/>
            <person name="Wang Y."/>
            <person name="Fonseca D.R."/>
            <person name="Shukla T."/>
            <person name="Alexander J.C."/>
            <person name="Qiu C."/>
            <person name="Wickens M."/>
            <person name="Lo T.W."/>
            <person name="Tanaka Hall T.M."/>
            <person name="Campbell Z.T."/>
        </authorList>
    </citation>
    <scope>X-RAY CRYSTALLOGRAPHY (2.25 ANGSTROMS) OF 164-575 OF MUTANTS ALA-363/TYR364;ALA-363/TYR-364/SER367 AND SER-363/TYR-364/SER-367 IN COMPLEXES WITH RNAS</scope>
    <scope>FUNCTION</scope>
    <scope>MUTAGENESIS OF CYS-363; ARG-364 AND GLN-367</scope>
</reference>
<reference evidence="32" key="12">
    <citation type="journal article" date="2019" name="Elife">
        <title>A crystal structure of a collaborative RNA regulatory complex reveals mechanisms to refine target specificity.</title>
        <authorList>
            <person name="Qiu C."/>
            <person name="Bhat V.D."/>
            <person name="Rajeev S."/>
            <person name="Zhang C."/>
            <person name="Lasley A.E."/>
            <person name="Wine R.N."/>
            <person name="Campbell Z.T."/>
            <person name="Hall T.M.T."/>
        </authorList>
    </citation>
    <scope>X-RAY CRYSTALLOGRAPHY (2.10 ANGSTROMS) OF 164-575 IN COMPLEX WITH LST-1 74-98 AND RNA</scope>
    <scope>FUNCTION</scope>
    <scope>SUBUNIT</scope>
    <scope>INTERACTION WITH LST-1</scope>
    <scope>MUTAGENESIS OF LEU-444; GLN-448; 479-TYR--THR-485; TYR-479; ILE-480; PRO-481; HIS-482; PRO-483; ASP-484 AND THR-485</scope>
</reference>
<reference evidence="33 34" key="13">
    <citation type="journal article" date="2022" name="Nucleic Acids Res.">
        <title>Bipartite interaction sites differentially modulate RNA-binding affinity of a protein complex essential for germline stem cell self-renewal.</title>
        <authorList>
            <person name="Qiu C."/>
            <person name="Wine R.N."/>
            <person name="Campbell Z.T."/>
            <person name="Hall T.M.T."/>
        </authorList>
    </citation>
    <scope>X-RAY CRYSTALLOGRAPHY (2.34 ANGSTROMS) OF 164-575 IN COMPLEX WITH LST-1 27-41 AND RNA</scope>
    <scope>FUNCTION</scope>
    <scope>INTERACTION WITH LST-1</scope>
</reference>
<reference evidence="35" key="14">
    <citation type="journal article" date="2023" name="Nat. Commun.">
        <title>Intra- and inter-molecular regulation by intrinsically-disordered regions governs PUF protein RNA binding.</title>
        <authorList>
            <person name="Qiu C."/>
            <person name="Zhang Z."/>
            <person name="Wine R.N."/>
            <person name="Campbell Z.T."/>
            <person name="Zhang J."/>
            <person name="Hall T.M.T."/>
        </authorList>
    </citation>
    <scope>X-RAY CRYSTALLOGRAPHY (2.09 ANGSTROMS) OF 164-632</scope>
    <scope>FUNCTION</scope>
    <scope>SUBUNIT</scope>
    <scope>INTERACTION WITH LST-1</scope>
    <scope>MUTAGENESIS OF TYR-479 AND LEU-610</scope>
</reference>